<proteinExistence type="evidence at protein level"/>
<protein>
    <recommendedName>
        <fullName>Elongator complex protein 5</fullName>
    </recommendedName>
    <alternativeName>
        <fullName>Gamma-toxin target 5</fullName>
    </alternativeName>
    <alternativeName>
        <fullName>HAT-associated protein 2</fullName>
    </alternativeName>
    <alternativeName>
        <fullName>Protein IKI1</fullName>
    </alternativeName>
</protein>
<comment type="function">
    <text evidence="2 6 8 17">Component of the elongator complex which is required for multiple tRNA modifications, including mcm5U (5-methoxycarbonylmethyl uridine), mcm5s2U (5-methoxycarbonylmethyl-2-thiouridine), and ncm5U (5-carbamoylmethyl uridine) (PubMed:15769872). The elongator complex catalyzes formation of carboxymethyluridine in the wobble base at position 34 in tRNAs (PubMed:29332244). It functions as a gamma-toxin target (TOT); disruption of the complex confers resistance to Kluyveromyces lactis toxin zymocin (pGKL1 killer toxin) (PubMed:11296232). May also be involved in sensitivity to Pichia inositovora toxin.</text>
</comment>
<comment type="pathway">
    <text evidence="8">tRNA modification; 5-methoxycarbonylmethyl-2-thiouridine-tRNA biosynthesis.</text>
</comment>
<comment type="subunit">
    <text evidence="3 4 5 10 11 12 14 15 16">Component of the elongator complex, which consists of ELP1/IKI3, ELP2, ELP3, ELP4, ELP5/IKI1 and ELP6 (PubMed:11390369, PubMed:11435442, PubMed:11689709, PubMed:27872205, PubMed:27974378). The elongator complex is composed of two copies of the Elp123 subcomplex (composed of ELP1/IKI3, ELP2 and ELP3) and two copies of the Elp456 subcomplex (composed of ELP4, ELP5/IKI1 and ELP6) (PubMed:27872205, PubMed:27974378). The Elp123 subcomplex forms a two-lobed scaffold, which binds the Elp456 subcomplex asymmetrically (PubMed:27872205, PubMed:27974378). In each lobe, ELP2 is tightly sandwiched between ELP1/IKI3 and ELP3 (PubMed:31309145). The Elp123 subcomplex binds tRNA through ELP1/IKI3 and ELP3 and can bind 2 tRNAs simultaneously (PubMed:31309145). tRNA-binding by the Elp123 subcomplex induces conformational rearrangements which precisely position the targeted anticodon base in the active site (PubMed:31309145). The Elp456 subcomplex binds tRNA and has ATPase activity (PubMed:22343726, PubMed:22556426). Interacts with KTI11/DPH3 (PubMed:18627462).</text>
</comment>
<comment type="interaction">
    <interactant intactId="EBI-9061">
        <id>P38874</id>
    </interactant>
    <interactant intactId="EBI-23459">
        <id>P42935</id>
        <label>ELP2</label>
    </interactant>
    <organismsDiffer>false</organismsDiffer>
    <experiments>6</experiments>
</comment>
<comment type="interaction">
    <interactant intactId="EBI-9061">
        <id>P38874</id>
    </interactant>
    <interactant intactId="EBI-33957">
        <id>Q02908</id>
        <label>ELP3</label>
    </interactant>
    <organismsDiffer>false</organismsDiffer>
    <experiments>7</experiments>
</comment>
<comment type="interaction">
    <interactant intactId="EBI-9061">
        <id>P38874</id>
    </interactant>
    <interactant intactId="EBI-35277">
        <id>Q02884</id>
        <label>ELP4</label>
    </interactant>
    <organismsDiffer>false</organismsDiffer>
    <experiments>14</experiments>
</comment>
<comment type="interaction">
    <interactant intactId="EBI-9061">
        <id>P38874</id>
    </interactant>
    <interactant intactId="EBI-27653">
        <id>Q04868</id>
        <label>ELP6</label>
    </interactant>
    <organismsDiffer>false</organismsDiffer>
    <experiments>8</experiments>
</comment>
<comment type="interaction">
    <interactant intactId="EBI-9061">
        <id>P38874</id>
    </interactant>
    <interactant intactId="EBI-9061">
        <id>P38874</id>
        <label>IKI1</label>
    </interactant>
    <organismsDiffer>false</organismsDiffer>
    <experiments>2</experiments>
</comment>
<comment type="interaction">
    <interactant intactId="EBI-9061">
        <id>P38874</id>
    </interactant>
    <interactant intactId="EBI-9068">
        <id>Q06706</id>
        <label>IKI3</label>
    </interactant>
    <organismsDiffer>false</organismsDiffer>
    <experiments>11</experiments>
</comment>
<comment type="subcellular location">
    <subcellularLocation>
        <location evidence="9">Cytoplasm</location>
    </subcellularLocation>
    <subcellularLocation>
        <location evidence="1">Nucleus</location>
    </subcellularLocation>
</comment>
<comment type="miscellaneous">
    <text evidence="7">Present with 3870 molecules/cell in log phase SD medium.</text>
</comment>
<comment type="similarity">
    <text evidence="18">Belongs to the ELP5 family.</text>
</comment>
<comment type="caution">
    <text evidence="19 20 21 22">The elongator complex was originally thought to play a role in transcription elongation. However, it is no longer thought to play a direct role in this process and its primary function is thought to be in tRNA modification.</text>
</comment>
<keyword id="KW-0002">3D-structure</keyword>
<keyword id="KW-0963">Cytoplasm</keyword>
<keyword id="KW-0539">Nucleus</keyword>
<keyword id="KW-0597">Phosphoprotein</keyword>
<keyword id="KW-1185">Reference proteome</keyword>
<keyword id="KW-0819">tRNA processing</keyword>
<name>ELP5_YEAST</name>
<sequence>MASSSHNPVILLKRILSLTESSPFILCLDSIAQTSYKLIQEFVHQSKSKGNEYPIVYISFETVNKPSYCTQFIDATQMDFVHLVKQIISYLPAATATQAKKHMVIIDSLNYISTEYITRFLSEIASPHCTMVATYHKDIKDENRTVIPDWNNNYPDKLTLLQFMATTIVDIDVVLTGTLDTEEVSELLNEFRIPRGLNNDIFQLRLVNKRKSGRSLEYDFIVNSNTHEYELLSTTKQEEESSSNGLETPEMLQGLTTFNLGTSNKQKLAKDQVALPFLEAQSFGQGGAIVYEYEKDDDYDEEDPYEDPF</sequence>
<organism>
    <name type="scientific">Saccharomyces cerevisiae (strain ATCC 204508 / S288c)</name>
    <name type="common">Baker's yeast</name>
    <dbReference type="NCBI Taxonomy" id="559292"/>
    <lineage>
        <taxon>Eukaryota</taxon>
        <taxon>Fungi</taxon>
        <taxon>Dikarya</taxon>
        <taxon>Ascomycota</taxon>
        <taxon>Saccharomycotina</taxon>
        <taxon>Saccharomycetes</taxon>
        <taxon>Saccharomycetales</taxon>
        <taxon>Saccharomycetaceae</taxon>
        <taxon>Saccharomyces</taxon>
    </lineage>
</organism>
<reference key="1">
    <citation type="journal article" date="1997" name="Biosci. Biotechnol. Biochem.">
        <title>Characterization of IKI1 and IKI3 genes conferring pGKL killer sensitivity on Saccharomyces cerevisiae.</title>
        <authorList>
            <person name="Yajima H."/>
            <person name="Tokunaga M."/>
            <person name="Nakayama-Murayama A."/>
            <person name="Hishinuma F."/>
        </authorList>
    </citation>
    <scope>NUCLEOTIDE SEQUENCE [GENOMIC DNA]</scope>
</reference>
<reference key="2">
    <citation type="journal article" date="1994" name="Science">
        <title>Complete nucleotide sequence of Saccharomyces cerevisiae chromosome VIII.</title>
        <authorList>
            <person name="Johnston M."/>
            <person name="Andrews S."/>
            <person name="Brinkman R."/>
            <person name="Cooper J."/>
            <person name="Ding H."/>
            <person name="Dover J."/>
            <person name="Du Z."/>
            <person name="Favello A."/>
            <person name="Fulton L."/>
            <person name="Gattung S."/>
            <person name="Geisel C."/>
            <person name="Kirsten J."/>
            <person name="Kucaba T."/>
            <person name="Hillier L.W."/>
            <person name="Jier M."/>
            <person name="Johnston L."/>
            <person name="Langston Y."/>
            <person name="Latreille P."/>
            <person name="Louis E.J."/>
            <person name="Macri C."/>
            <person name="Mardis E."/>
            <person name="Menezes S."/>
            <person name="Mouser L."/>
            <person name="Nhan M."/>
            <person name="Rifkin L."/>
            <person name="Riles L."/>
            <person name="St Peter H."/>
            <person name="Trevaskis E."/>
            <person name="Vaughan K."/>
            <person name="Vignati D."/>
            <person name="Wilcox L."/>
            <person name="Wohldman P."/>
            <person name="Waterston R."/>
            <person name="Wilson R."/>
            <person name="Vaudin M."/>
        </authorList>
    </citation>
    <scope>NUCLEOTIDE SEQUENCE [LARGE SCALE GENOMIC DNA]</scope>
    <source>
        <strain>ATCC 204508 / S288c</strain>
    </source>
</reference>
<reference key="3">
    <citation type="journal article" date="2014" name="G3 (Bethesda)">
        <title>The reference genome sequence of Saccharomyces cerevisiae: Then and now.</title>
        <authorList>
            <person name="Engel S.R."/>
            <person name="Dietrich F.S."/>
            <person name="Fisk D.G."/>
            <person name="Binkley G."/>
            <person name="Balakrishnan R."/>
            <person name="Costanzo M.C."/>
            <person name="Dwight S.S."/>
            <person name="Hitz B.C."/>
            <person name="Karra K."/>
            <person name="Nash R.S."/>
            <person name="Weng S."/>
            <person name="Wong E.D."/>
            <person name="Lloyd P."/>
            <person name="Skrzypek M.S."/>
            <person name="Miyasato S.R."/>
            <person name="Simison M."/>
            <person name="Cherry J.M."/>
        </authorList>
    </citation>
    <scope>GENOME REANNOTATION</scope>
    <source>
        <strain>ATCC 204508 / S288c</strain>
    </source>
</reference>
<reference key="4">
    <citation type="journal article" date="1999" name="Mol. Cell">
        <title>Elongator, a multisubunit component of a novel RNA polymerase II holoenzyme for transcriptional elongation.</title>
        <authorList>
            <person name="Otero G."/>
            <person name="Fellows J."/>
            <person name="Li Y."/>
            <person name="de Bizemont T."/>
            <person name="Dirac A.M."/>
            <person name="Gustafsson C.M."/>
            <person name="Erdjument-Bromage H."/>
            <person name="Tempst P."/>
            <person name="Svejstrup J.Q."/>
        </authorList>
    </citation>
    <scope>SUBCELLULAR LOCATION</scope>
</reference>
<reference key="5">
    <citation type="journal article" date="2001" name="EMBO J.">
        <title>Saccharomyces cerevisiae Elongator mutations confer resistance to the Kluyveromyces lactis zymocin.</title>
        <authorList>
            <person name="Frohloff F."/>
            <person name="Fichtner L."/>
            <person name="Jablonowski D."/>
            <person name="Breunig K.D."/>
            <person name="Schaffrath R."/>
        </authorList>
    </citation>
    <scope>FUNCTION OF THE ELONGATOR COMPLEX IN ZYMOCIN SENSITIVITY</scope>
</reference>
<reference key="6">
    <citation type="journal article" date="2001" name="J. Biol. Chem.">
        <title>RNA polymerase II elongator holoenzyme is composed of two discrete subcomplexes.</title>
        <authorList>
            <person name="Winkler G.S."/>
            <person name="Petrakis T.G."/>
            <person name="Ethelberg S."/>
            <person name="Tokunaga M."/>
            <person name="Erdjument-Bromage H."/>
            <person name="Tempst P."/>
            <person name="Svejstrup J.Q."/>
        </authorList>
    </citation>
    <scope>IDENTIFICATION IN THE ELONGATOR COMPLEX</scope>
</reference>
<reference key="7">
    <citation type="journal article" date="2001" name="J. Biol. Chem.">
        <title>A multiprotein complex that interacts with RNA polymerase II elongator.</title>
        <authorList>
            <person name="Li Y."/>
            <person name="Takagi Y."/>
            <person name="Jiang Y."/>
            <person name="Tokunaga M."/>
            <person name="Erdjument-Bromage H."/>
            <person name="Tempst P."/>
            <person name="Kornberg R.D."/>
        </authorList>
    </citation>
    <scope>IDENTIFICATION IN THE ELONGATOR COMPLEX</scope>
    <scope>IDENTIFICATION BY MASS SPECTROMETRY</scope>
</reference>
<reference key="8">
    <citation type="journal article" date="2001" name="Mol. Cell. Biol.">
        <title>Characterization of a six-subunit holo-elongator complex required for the regulated expression of a group of genes in Saccharomyces cerevisiae.</title>
        <authorList>
            <person name="Krogan N.J."/>
            <person name="Greenblatt J.F."/>
        </authorList>
    </citation>
    <scope>IDENTIFICATION IN THE ELONGATOR COMPLEX</scope>
</reference>
<reference key="9">
    <citation type="journal article" date="2002" name="Proc. Natl. Acad. Sci. U.S.A.">
        <title>Elongator is a histone H3 and H4 acetyltransferase important for normal histone acetylation levels in vivo.</title>
        <authorList>
            <person name="Winkler G.S."/>
            <person name="Kristjuhan A."/>
            <person name="Erdjument-Bromage H."/>
            <person name="Tempst P."/>
            <person name="Svejstrup J.Q."/>
        </authorList>
    </citation>
    <scope>DISPUTED FUNCTION IN HISTONE ACETYLATION</scope>
</reference>
<reference key="10">
    <citation type="journal article" date="2003" name="Mol. Genet. Genomics">
        <title>Structural and functional analysis of the killer element pPin1-3 from Pichia inositovora.</title>
        <authorList>
            <person name="Klassen R."/>
            <person name="Meinhardt F."/>
        </authorList>
    </citation>
    <scope>FUNCTION OF THE ELONGATOR COMPLEX IN PICHIA INOSITOVORA TOXIN SENSITIVITY</scope>
</reference>
<reference key="11">
    <citation type="journal article" date="2003" name="Nature">
        <title>Global analysis of protein localization in budding yeast.</title>
        <authorList>
            <person name="Huh W.-K."/>
            <person name="Falvo J.V."/>
            <person name="Gerke L.C."/>
            <person name="Carroll A.S."/>
            <person name="Howson R.W."/>
            <person name="Weissman J.S."/>
            <person name="O'Shea E.K."/>
        </authorList>
    </citation>
    <scope>SUBCELLULAR LOCATION [LARGE SCALE ANALYSIS]</scope>
</reference>
<reference key="12">
    <citation type="journal article" date="2003" name="Nature">
        <title>Global analysis of protein expression in yeast.</title>
        <authorList>
            <person name="Ghaemmaghami S."/>
            <person name="Huh W.-K."/>
            <person name="Bower K."/>
            <person name="Howson R.W."/>
            <person name="Belle A."/>
            <person name="Dephoure N."/>
            <person name="O'Shea E.K."/>
            <person name="Weissman J.S."/>
        </authorList>
    </citation>
    <scope>LEVEL OF PROTEIN EXPRESSION [LARGE SCALE ANALYSIS]</scope>
</reference>
<reference key="13">
    <citation type="journal article" date="2005" name="Mol. Cell">
        <title>Elp1p, the yeast homolog of the FD disease syndrome protein, negatively regulates exocytosis independently of transcriptional elongation.</title>
        <authorList>
            <person name="Rahl P.B."/>
            <person name="Chen C.Z."/>
            <person name="Collins R.N."/>
        </authorList>
    </citation>
    <scope>SUBCELLULAR LOCATION</scope>
</reference>
<reference key="14">
    <citation type="journal article" date="2005" name="RNA">
        <title>An early step in wobble uridine tRNA modification requires the Elongator complex.</title>
        <authorList>
            <person name="Huang B."/>
            <person name="Johansson M.J.O."/>
            <person name="Bystroem A.S."/>
        </authorList>
    </citation>
    <scope>FUNCTION IN TRNA MODIFICATION</scope>
</reference>
<reference key="15">
    <citation type="journal article" date="2008" name="Mol. Microbiol.">
        <title>A versatile partner of eukaryotic protein complexes that is involved in multiple biological processes: Kti11/Dph3.</title>
        <authorList>
            <person name="Baer C."/>
            <person name="Zabel R."/>
            <person name="Liu S."/>
            <person name="Stark M.J."/>
            <person name="Schaffrath R."/>
        </authorList>
    </citation>
    <scope>INTERACTION WITH KTI11</scope>
</reference>
<reference key="16">
    <citation type="journal article" date="2015" name="PLoS Genet.">
        <title>Phosphorylation of Elp1 by Hrr25 is required for elongator-dependent tRNA modification in yeast.</title>
        <authorList>
            <person name="Abdel-Fattah W."/>
            <person name="Jablonowski D."/>
            <person name="Di Santo R."/>
            <person name="Thuering K.L."/>
            <person name="Scheidt V."/>
            <person name="Hammermeister A."/>
            <person name="Ten Have S."/>
            <person name="Helm M."/>
            <person name="Schaffrath R."/>
            <person name="Stark M.J."/>
        </authorList>
    </citation>
    <scope>PHOSPHORYLATION AT SER-3 AND SER-4</scope>
</reference>
<reference key="17">
    <citation type="journal article" date="2018" name="Cell. Mol. Life Sci.">
        <title>Structural insights into the function of Elongator.</title>
        <authorList>
            <person name="Dalwadi U."/>
            <person name="Yip C.K."/>
        </authorList>
    </citation>
    <scope>REVIEW</scope>
</reference>
<reference key="18">
    <citation type="journal article" date="2019" name="Sci. Adv.">
        <title>Molecular basis of tRNA recognition by the Elongator complex.</title>
        <authorList>
            <person name="Dauden M.I."/>
            <person name="Jaciuk M."/>
            <person name="Weis F."/>
            <person name="Lin T.Y."/>
            <person name="Kleindienst C."/>
            <person name="Abbassi N.E.H."/>
            <person name="Khatter H."/>
            <person name="Krutyholowa R."/>
            <person name="Breunig K.D."/>
            <person name="Kosinski J."/>
            <person name="Mueller C.W."/>
            <person name="Glatt S."/>
        </authorList>
    </citation>
    <scope>SUBUNIT</scope>
</reference>
<reference evidence="24" key="19">
    <citation type="journal article" date="2012" name="J. Biol. Chem.">
        <title>Crystal structure of elongator subcomplex Elp4-6.</title>
        <authorList>
            <person name="Lin Z."/>
            <person name="Zhao W."/>
            <person name="Diao W."/>
            <person name="Xie X."/>
            <person name="Wang Z."/>
            <person name="Zhang J."/>
            <person name="Shen Y."/>
            <person name="Long J."/>
        </authorList>
    </citation>
    <scope>X-RAY CRYSTALLOGRAPHY (2.61 ANGSTROMS) OF 1-238</scope>
</reference>
<reference evidence="23" key="20">
    <citation type="journal article" date="2012" name="Nat. Struct. Mol. Biol.">
        <title>The Elongator subcomplex Elp456 is a hexameric RecA-like ATPase.</title>
        <authorList>
            <person name="Glatt S."/>
            <person name="Letoquart J."/>
            <person name="Faux C."/>
            <person name="Taylor N.M."/>
            <person name="Seraphin B."/>
            <person name="Muller C.W."/>
        </authorList>
    </citation>
    <scope>X-RAY CRYSTALLOGRAPHY (2.10 ANGSTROMS) OF 1-270</scope>
    <scope>SUBUNIT</scope>
</reference>
<reference key="21">
    <citation type="journal article" date="2017" name="EMBO Rep.">
        <title>Architecture of the yeast Elongator complex.</title>
        <authorList>
            <person name="Dauden M.I."/>
            <person name="Kosinski J."/>
            <person name="Kolaj-Robin O."/>
            <person name="Desfosses A."/>
            <person name="Ori A."/>
            <person name="Faux C."/>
            <person name="Hoffmann N.A."/>
            <person name="Onuma O.F."/>
            <person name="Breunig K.D."/>
            <person name="Beck M."/>
            <person name="Sachse C."/>
            <person name="Seraphin B."/>
            <person name="Glatt S."/>
            <person name="Mueller C.W."/>
        </authorList>
    </citation>
    <scope>STRUCTURE BY ELECTRON MICROSCOPY (3.3 ANGSTROMS)</scope>
    <scope>IDENTIFICATION IN THE ELONGATOR COMPLEX</scope>
</reference>
<reference key="22">
    <citation type="journal article" date="2017" name="EMBO Rep.">
        <title>Molecular architecture of the yeast Elongator complex reveals an unexpected asymmetric subunit arrangement.</title>
        <authorList>
            <person name="Setiaputra D.T."/>
            <person name="Cheng D.T."/>
            <person name="Lu S."/>
            <person name="Hansen J.M."/>
            <person name="Dalwadi U."/>
            <person name="Lam C.H."/>
            <person name="To J.L."/>
            <person name="Dong M.Q."/>
            <person name="Yip C.K."/>
        </authorList>
    </citation>
    <scope>STRUCTURE BY ELECTRON MICROSCOPY</scope>
    <scope>IDENTIFICATION IN THE ELONGATOR COMPLEX</scope>
</reference>
<dbReference type="EMBL" id="D83267">
    <property type="protein sequence ID" value="BAA20087.1"/>
    <property type="molecule type" value="Genomic_DNA"/>
</dbReference>
<dbReference type="EMBL" id="U00030">
    <property type="protein sequence ID" value="AAB68362.1"/>
    <property type="molecule type" value="Genomic_DNA"/>
</dbReference>
<dbReference type="EMBL" id="BK006934">
    <property type="protein sequence ID" value="DAA06879.1"/>
    <property type="molecule type" value="Genomic_DNA"/>
</dbReference>
<dbReference type="PIR" id="S46684">
    <property type="entry name" value="S46684"/>
</dbReference>
<dbReference type="RefSeq" id="NP_012057.3">
    <property type="nucleotide sequence ID" value="NM_001179318.3"/>
</dbReference>
<dbReference type="PDB" id="4A8J">
    <property type="method" value="X-ray"/>
    <property type="resolution" value="2.10 A"/>
    <property type="chains" value="B/E=1-270"/>
</dbReference>
<dbReference type="PDB" id="4EJS">
    <property type="method" value="X-ray"/>
    <property type="resolution" value="2.61 A"/>
    <property type="chains" value="B=1-238"/>
</dbReference>
<dbReference type="PDB" id="8ASV">
    <property type="method" value="EM"/>
    <property type="resolution" value="4.35 A"/>
    <property type="chains" value="E/H=1-309"/>
</dbReference>
<dbReference type="PDB" id="8AT6">
    <property type="method" value="EM"/>
    <property type="resolution" value="3.70 A"/>
    <property type="chains" value="B/E=1-309"/>
</dbReference>
<dbReference type="PDBsum" id="4A8J"/>
<dbReference type="PDBsum" id="4EJS"/>
<dbReference type="PDBsum" id="8ASV"/>
<dbReference type="PDBsum" id="8AT6"/>
<dbReference type="EMDB" id="EMD-15622"/>
<dbReference type="EMDB" id="EMD-15635"/>
<dbReference type="SMR" id="P38874"/>
<dbReference type="BioGRID" id="36621">
    <property type="interactions" value="187"/>
</dbReference>
<dbReference type="ComplexPortal" id="CPX-779">
    <property type="entry name" value="Elongator holoenzyme complex"/>
</dbReference>
<dbReference type="DIP" id="DIP-1967N"/>
<dbReference type="FunCoup" id="P38874">
    <property type="interactions" value="1608"/>
</dbReference>
<dbReference type="IntAct" id="P38874">
    <property type="interactions" value="12"/>
</dbReference>
<dbReference type="MINT" id="P38874"/>
<dbReference type="STRING" id="4932.YHR187W"/>
<dbReference type="iPTMnet" id="P38874"/>
<dbReference type="PaxDb" id="4932-YHR187W"/>
<dbReference type="PeptideAtlas" id="P38874"/>
<dbReference type="DNASU" id="856594"/>
<dbReference type="EnsemblFungi" id="YHR187W_mRNA">
    <property type="protein sequence ID" value="YHR187W"/>
    <property type="gene ID" value="YHR187W"/>
</dbReference>
<dbReference type="GeneID" id="856594"/>
<dbReference type="KEGG" id="sce:YHR187W"/>
<dbReference type="AGR" id="SGD:S000001230"/>
<dbReference type="SGD" id="S000001230">
    <property type="gene designation" value="IKI1"/>
</dbReference>
<dbReference type="VEuPathDB" id="FungiDB:YHR187W"/>
<dbReference type="eggNOG" id="ENOG502QQIZ">
    <property type="taxonomic scope" value="Eukaryota"/>
</dbReference>
<dbReference type="GeneTree" id="ENSGT00390000009210"/>
<dbReference type="HOGENOM" id="CLU_050414_1_0_1"/>
<dbReference type="InParanoid" id="P38874"/>
<dbReference type="OMA" id="VIYVSFE"/>
<dbReference type="OrthoDB" id="166907at2759"/>
<dbReference type="BioCyc" id="MetaCyc:G3O-31217-MONOMER"/>
<dbReference type="BioCyc" id="YEAST:G3O-31217-MONOMER"/>
<dbReference type="UniPathway" id="UPA00988"/>
<dbReference type="BioGRID-ORCS" id="856594">
    <property type="hits" value="0 hits in 10 CRISPR screens"/>
</dbReference>
<dbReference type="EvolutionaryTrace" id="P38874"/>
<dbReference type="PRO" id="PR:P38874"/>
<dbReference type="Proteomes" id="UP000002311">
    <property type="component" value="Chromosome VIII"/>
</dbReference>
<dbReference type="RNAct" id="P38874">
    <property type="molecule type" value="protein"/>
</dbReference>
<dbReference type="GO" id="GO:0005737">
    <property type="term" value="C:cytoplasm"/>
    <property type="evidence" value="ECO:0000314"/>
    <property type="project" value="SGD"/>
</dbReference>
<dbReference type="GO" id="GO:0005829">
    <property type="term" value="C:cytosol"/>
    <property type="evidence" value="ECO:0000318"/>
    <property type="project" value="GO_Central"/>
</dbReference>
<dbReference type="GO" id="GO:0033588">
    <property type="term" value="C:elongator holoenzyme complex"/>
    <property type="evidence" value="ECO:0000314"/>
    <property type="project" value="UniProtKB"/>
</dbReference>
<dbReference type="GO" id="GO:0005654">
    <property type="term" value="C:nucleoplasm"/>
    <property type="evidence" value="ECO:0000304"/>
    <property type="project" value="Reactome"/>
</dbReference>
<dbReference type="GO" id="GO:0005634">
    <property type="term" value="C:nucleus"/>
    <property type="evidence" value="ECO:0000314"/>
    <property type="project" value="SGD"/>
</dbReference>
<dbReference type="GO" id="GO:0005777">
    <property type="term" value="C:peroxisome"/>
    <property type="evidence" value="ECO:0000314"/>
    <property type="project" value="SGD"/>
</dbReference>
<dbReference type="GO" id="GO:0042802">
    <property type="term" value="F:identical protein binding"/>
    <property type="evidence" value="ECO:0000353"/>
    <property type="project" value="IntAct"/>
</dbReference>
<dbReference type="GO" id="GO:0006417">
    <property type="term" value="P:regulation of translation"/>
    <property type="evidence" value="ECO:0000303"/>
    <property type="project" value="ComplexPortal"/>
</dbReference>
<dbReference type="GO" id="GO:0006400">
    <property type="term" value="P:tRNA modification"/>
    <property type="evidence" value="ECO:0000315"/>
    <property type="project" value="SGD"/>
</dbReference>
<dbReference type="GO" id="GO:0002098">
    <property type="term" value="P:tRNA wobble uridine modification"/>
    <property type="evidence" value="ECO:0000303"/>
    <property type="project" value="ComplexPortal"/>
</dbReference>
<dbReference type="CDD" id="cd19479">
    <property type="entry name" value="Elp456"/>
    <property type="match status" value="1"/>
</dbReference>
<dbReference type="FunFam" id="3.40.50.300:FF:002620">
    <property type="entry name" value="Elongator complex protein 5"/>
    <property type="match status" value="1"/>
</dbReference>
<dbReference type="Gene3D" id="3.40.50.300">
    <property type="entry name" value="P-loop containing nucleotide triphosphate hydrolases"/>
    <property type="match status" value="1"/>
</dbReference>
<dbReference type="InterPro" id="IPR019519">
    <property type="entry name" value="Elp5"/>
</dbReference>
<dbReference type="InterPro" id="IPR027417">
    <property type="entry name" value="P-loop_NTPase"/>
</dbReference>
<dbReference type="PANTHER" id="PTHR15641">
    <property type="entry name" value="ELONGATOR COMPLEX PROTEIN 5"/>
    <property type="match status" value="1"/>
</dbReference>
<dbReference type="PANTHER" id="PTHR15641:SF1">
    <property type="entry name" value="ELONGATOR COMPLEX PROTEIN 5"/>
    <property type="match status" value="1"/>
</dbReference>
<dbReference type="Pfam" id="PF10483">
    <property type="entry name" value="Elong_Iki1"/>
    <property type="match status" value="1"/>
</dbReference>
<accession>P38874</accession>
<accession>D3DLD5</accession>
<feature type="chain" id="PRO_0000084178" description="Elongator complex protein 5">
    <location>
        <begin position="1"/>
        <end position="309"/>
    </location>
</feature>
<feature type="modified residue" description="Phosphoserine" evidence="13">
    <location>
        <position position="3"/>
    </location>
</feature>
<feature type="modified residue" description="Phosphoserine" evidence="13">
    <location>
        <position position="4"/>
    </location>
</feature>
<feature type="helix" evidence="25">
    <location>
        <begin position="8"/>
        <end position="16"/>
    </location>
</feature>
<feature type="strand" evidence="25">
    <location>
        <begin position="23"/>
        <end position="30"/>
    </location>
</feature>
<feature type="helix" evidence="25">
    <location>
        <begin position="36"/>
        <end position="48"/>
    </location>
</feature>
<feature type="strand" evidence="25">
    <location>
        <begin position="55"/>
        <end position="61"/>
    </location>
</feature>
<feature type="strand" evidence="25">
    <location>
        <begin position="70"/>
        <end position="74"/>
    </location>
</feature>
<feature type="helix" evidence="25">
    <location>
        <begin position="80"/>
        <end position="89"/>
    </location>
</feature>
<feature type="strand" evidence="25">
    <location>
        <begin position="102"/>
        <end position="107"/>
    </location>
</feature>
<feature type="helix" evidence="25">
    <location>
        <begin position="109"/>
        <end position="111"/>
    </location>
</feature>
<feature type="helix" evidence="25">
    <location>
        <begin position="114"/>
        <end position="116"/>
    </location>
</feature>
<feature type="helix" evidence="25">
    <location>
        <begin position="117"/>
        <end position="124"/>
    </location>
</feature>
<feature type="strand" evidence="25">
    <location>
        <begin position="129"/>
        <end position="136"/>
    </location>
</feature>
<feature type="turn" evidence="26">
    <location>
        <begin position="151"/>
        <end position="153"/>
    </location>
</feature>
<feature type="helix" evidence="25">
    <location>
        <begin position="157"/>
        <end position="164"/>
    </location>
</feature>
<feature type="strand" evidence="25">
    <location>
        <begin position="166"/>
        <end position="173"/>
    </location>
</feature>
<feature type="helix" evidence="25">
    <location>
        <begin position="181"/>
        <end position="189"/>
    </location>
</feature>
<feature type="strand" evidence="25">
    <location>
        <begin position="200"/>
        <end position="209"/>
    </location>
</feature>
<feature type="strand" evidence="25">
    <location>
        <begin position="215"/>
        <end position="223"/>
    </location>
</feature>
<feature type="turn" evidence="25">
    <location>
        <begin position="224"/>
        <end position="227"/>
    </location>
</feature>
<feature type="strand" evidence="25">
    <location>
        <begin position="228"/>
        <end position="231"/>
    </location>
</feature>
<gene>
    <name type="primary">IKI1</name>
    <name type="synonym">ELP5</name>
    <name type="synonym">HAP2</name>
    <name type="synonym">TOT5</name>
    <name type="ordered locus">YHR187W</name>
</gene>
<evidence type="ECO:0000269" key="1">
    <source>
    </source>
</evidence>
<evidence type="ECO:0000269" key="2">
    <source>
    </source>
</evidence>
<evidence type="ECO:0000269" key="3">
    <source>
    </source>
</evidence>
<evidence type="ECO:0000269" key="4">
    <source>
    </source>
</evidence>
<evidence type="ECO:0000269" key="5">
    <source>
    </source>
</evidence>
<evidence type="ECO:0000269" key="6">
    <source>
    </source>
</evidence>
<evidence type="ECO:0000269" key="7">
    <source>
    </source>
</evidence>
<evidence type="ECO:0000269" key="8">
    <source>
    </source>
</evidence>
<evidence type="ECO:0000269" key="9">
    <source>
    </source>
</evidence>
<evidence type="ECO:0000269" key="10">
    <source>
    </source>
</evidence>
<evidence type="ECO:0000269" key="11">
    <source>
    </source>
</evidence>
<evidence type="ECO:0000269" key="12">
    <source>
    </source>
</evidence>
<evidence type="ECO:0000269" key="13">
    <source>
    </source>
</evidence>
<evidence type="ECO:0000269" key="14">
    <source>
    </source>
</evidence>
<evidence type="ECO:0000269" key="15">
    <source>
    </source>
</evidence>
<evidence type="ECO:0000269" key="16">
    <source>
    </source>
</evidence>
<evidence type="ECO:0000303" key="17">
    <source>
    </source>
</evidence>
<evidence type="ECO:0000305" key="18"/>
<evidence type="ECO:0000305" key="19">
    <source>
    </source>
</evidence>
<evidence type="ECO:0000305" key="20">
    <source>
    </source>
</evidence>
<evidence type="ECO:0000305" key="21">
    <source>
    </source>
</evidence>
<evidence type="ECO:0000305" key="22">
    <source>
    </source>
</evidence>
<evidence type="ECO:0007744" key="23">
    <source>
        <dbReference type="PDB" id="4A8J"/>
    </source>
</evidence>
<evidence type="ECO:0007744" key="24">
    <source>
        <dbReference type="PDB" id="4EJS"/>
    </source>
</evidence>
<evidence type="ECO:0007829" key="25">
    <source>
        <dbReference type="PDB" id="4A8J"/>
    </source>
</evidence>
<evidence type="ECO:0007829" key="26">
    <source>
        <dbReference type="PDB" id="4EJS"/>
    </source>
</evidence>